<evidence type="ECO:0000255" key="1">
    <source>
        <dbReference type="HAMAP-Rule" id="MF_00195"/>
    </source>
</evidence>
<sequence>MIPIIVLIGRTNVGKSTLFNVLTKTRDALVANYPGITRDRQYGYCKLQSNKKIILIDTAGLDIKLNEIEKQAQAQTLIAIKEAHLILFLVNARDGLMPQEYEISKNIRKYQKKTILVINKIDGINEASKINEFYSLGFEKIQKISASHNQGINTLINRYLIPWISEKFKKKITENLYKDTELKKIAIKVAFIGRPNVGKSTLINGILKEERMITSNTPGTTLDSISTPIKYNYENYTLIDTAGASKKKKKINDFQRFSIIKTLQTIEKSNVILLIIDASLQTCHQDLSLADFIIHSGKGIVVVVNKCDLFNSVELKKIKELIKSKLKFLYFSKIHFISALYKKGIFQLFKSIKESYEDSKRKISTSTLIRTMHIAIKKHQPPIIKGRRIKLKYAHLGSSNPPKIIIHGNQVKYLSLPYKRYLINFFYKTLKIKGTPIQIQFKDNENPYVKNKN</sequence>
<accession>B8D8C1</accession>
<name>DER_BUCAT</name>
<feature type="chain" id="PRO_1000124346" description="GTPase Der">
    <location>
        <begin position="1"/>
        <end position="453"/>
    </location>
</feature>
<feature type="domain" description="EngA-type G 1">
    <location>
        <begin position="3"/>
        <end position="167"/>
    </location>
</feature>
<feature type="domain" description="EngA-type G 2">
    <location>
        <begin position="187"/>
        <end position="360"/>
    </location>
</feature>
<feature type="domain" description="KH-like" evidence="1">
    <location>
        <begin position="361"/>
        <end position="445"/>
    </location>
</feature>
<feature type="binding site" evidence="1">
    <location>
        <begin position="9"/>
        <end position="16"/>
    </location>
    <ligand>
        <name>GTP</name>
        <dbReference type="ChEBI" id="CHEBI:37565"/>
        <label>1</label>
    </ligand>
</feature>
<feature type="binding site" evidence="1">
    <location>
        <begin position="57"/>
        <end position="61"/>
    </location>
    <ligand>
        <name>GTP</name>
        <dbReference type="ChEBI" id="CHEBI:37565"/>
        <label>1</label>
    </ligand>
</feature>
<feature type="binding site" evidence="1">
    <location>
        <begin position="119"/>
        <end position="122"/>
    </location>
    <ligand>
        <name>GTP</name>
        <dbReference type="ChEBI" id="CHEBI:37565"/>
        <label>1</label>
    </ligand>
</feature>
<feature type="binding site" evidence="1">
    <location>
        <begin position="193"/>
        <end position="200"/>
    </location>
    <ligand>
        <name>GTP</name>
        <dbReference type="ChEBI" id="CHEBI:37565"/>
        <label>2</label>
    </ligand>
</feature>
<feature type="binding site" evidence="1">
    <location>
        <begin position="240"/>
        <end position="244"/>
    </location>
    <ligand>
        <name>GTP</name>
        <dbReference type="ChEBI" id="CHEBI:37565"/>
        <label>2</label>
    </ligand>
</feature>
<feature type="binding site" evidence="1">
    <location>
        <begin position="305"/>
        <end position="308"/>
    </location>
    <ligand>
        <name>GTP</name>
        <dbReference type="ChEBI" id="CHEBI:37565"/>
        <label>2</label>
    </ligand>
</feature>
<keyword id="KW-0342">GTP-binding</keyword>
<keyword id="KW-0547">Nucleotide-binding</keyword>
<keyword id="KW-0677">Repeat</keyword>
<keyword id="KW-0690">Ribosome biogenesis</keyword>
<gene>
    <name evidence="1" type="primary">der</name>
    <name type="synonym">engA</name>
    <name type="ordered locus">BUAPTUC7_600</name>
</gene>
<organism>
    <name type="scientific">Buchnera aphidicola subsp. Acyrthosiphon pisum (strain Tuc7)</name>
    <dbReference type="NCBI Taxonomy" id="561501"/>
    <lineage>
        <taxon>Bacteria</taxon>
        <taxon>Pseudomonadati</taxon>
        <taxon>Pseudomonadota</taxon>
        <taxon>Gammaproteobacteria</taxon>
        <taxon>Enterobacterales</taxon>
        <taxon>Erwiniaceae</taxon>
        <taxon>Buchnera</taxon>
    </lineage>
</organism>
<comment type="function">
    <text evidence="1">GTPase that plays an essential role in the late steps of ribosome biogenesis.</text>
</comment>
<comment type="subunit">
    <text evidence="1">Associates with the 50S ribosomal subunit.</text>
</comment>
<comment type="similarity">
    <text evidence="1">Belongs to the TRAFAC class TrmE-Era-EngA-EngB-Septin-like GTPase superfamily. EngA (Der) GTPase family.</text>
</comment>
<proteinExistence type="inferred from homology"/>
<protein>
    <recommendedName>
        <fullName evidence="1">GTPase Der</fullName>
    </recommendedName>
    <alternativeName>
        <fullName evidence="1">GTP-binding protein EngA</fullName>
    </alternativeName>
</protein>
<reference key="1">
    <citation type="journal article" date="2009" name="Science">
        <title>The dynamics and time scale of ongoing genomic erosion in symbiotic bacteria.</title>
        <authorList>
            <person name="Moran N.A."/>
            <person name="McLaughlin H.J."/>
            <person name="Sorek R."/>
        </authorList>
    </citation>
    <scope>NUCLEOTIDE SEQUENCE [LARGE SCALE GENOMIC DNA]</scope>
    <source>
        <strain>Tuc7</strain>
    </source>
</reference>
<dbReference type="EMBL" id="CP001158">
    <property type="protein sequence ID" value="ACL30386.1"/>
    <property type="molecule type" value="Genomic_DNA"/>
</dbReference>
<dbReference type="RefSeq" id="WP_012619597.1">
    <property type="nucleotide sequence ID" value="NC_011834.1"/>
</dbReference>
<dbReference type="SMR" id="B8D8C1"/>
<dbReference type="KEGG" id="bau:BUAPTUC7_600"/>
<dbReference type="HOGENOM" id="CLU_016077_5_1_6"/>
<dbReference type="GO" id="GO:0005525">
    <property type="term" value="F:GTP binding"/>
    <property type="evidence" value="ECO:0007669"/>
    <property type="project" value="UniProtKB-UniRule"/>
</dbReference>
<dbReference type="GO" id="GO:0043022">
    <property type="term" value="F:ribosome binding"/>
    <property type="evidence" value="ECO:0007669"/>
    <property type="project" value="TreeGrafter"/>
</dbReference>
<dbReference type="GO" id="GO:0042254">
    <property type="term" value="P:ribosome biogenesis"/>
    <property type="evidence" value="ECO:0007669"/>
    <property type="project" value="UniProtKB-KW"/>
</dbReference>
<dbReference type="CDD" id="cd01894">
    <property type="entry name" value="EngA1"/>
    <property type="match status" value="1"/>
</dbReference>
<dbReference type="CDD" id="cd01895">
    <property type="entry name" value="EngA2"/>
    <property type="match status" value="1"/>
</dbReference>
<dbReference type="FunFam" id="3.30.300.20:FF:000004">
    <property type="entry name" value="GTPase Der"/>
    <property type="match status" value="1"/>
</dbReference>
<dbReference type="Gene3D" id="3.30.300.20">
    <property type="match status" value="1"/>
</dbReference>
<dbReference type="Gene3D" id="3.40.50.300">
    <property type="entry name" value="P-loop containing nucleotide triphosphate hydrolases"/>
    <property type="match status" value="2"/>
</dbReference>
<dbReference type="HAMAP" id="MF_00195">
    <property type="entry name" value="GTPase_Der"/>
    <property type="match status" value="1"/>
</dbReference>
<dbReference type="InterPro" id="IPR031166">
    <property type="entry name" value="G_ENGA"/>
</dbReference>
<dbReference type="InterPro" id="IPR006073">
    <property type="entry name" value="GTP-bd"/>
</dbReference>
<dbReference type="InterPro" id="IPR016484">
    <property type="entry name" value="GTPase_Der"/>
</dbReference>
<dbReference type="InterPro" id="IPR032859">
    <property type="entry name" value="KH_dom-like"/>
</dbReference>
<dbReference type="InterPro" id="IPR015946">
    <property type="entry name" value="KH_dom-like_a/b"/>
</dbReference>
<dbReference type="InterPro" id="IPR027417">
    <property type="entry name" value="P-loop_NTPase"/>
</dbReference>
<dbReference type="InterPro" id="IPR005225">
    <property type="entry name" value="Small_GTP-bd"/>
</dbReference>
<dbReference type="NCBIfam" id="TIGR03594">
    <property type="entry name" value="GTPase_EngA"/>
    <property type="match status" value="1"/>
</dbReference>
<dbReference type="NCBIfam" id="TIGR00231">
    <property type="entry name" value="small_GTP"/>
    <property type="match status" value="2"/>
</dbReference>
<dbReference type="PANTHER" id="PTHR43834">
    <property type="entry name" value="GTPASE DER"/>
    <property type="match status" value="1"/>
</dbReference>
<dbReference type="PANTHER" id="PTHR43834:SF6">
    <property type="entry name" value="GTPASE DER"/>
    <property type="match status" value="1"/>
</dbReference>
<dbReference type="Pfam" id="PF14714">
    <property type="entry name" value="KH_dom-like"/>
    <property type="match status" value="1"/>
</dbReference>
<dbReference type="Pfam" id="PF01926">
    <property type="entry name" value="MMR_HSR1"/>
    <property type="match status" value="2"/>
</dbReference>
<dbReference type="PIRSF" id="PIRSF006485">
    <property type="entry name" value="GTP-binding_EngA"/>
    <property type="match status" value="1"/>
</dbReference>
<dbReference type="PRINTS" id="PR00326">
    <property type="entry name" value="GTP1OBG"/>
</dbReference>
<dbReference type="SUPFAM" id="SSF52540">
    <property type="entry name" value="P-loop containing nucleoside triphosphate hydrolases"/>
    <property type="match status" value="2"/>
</dbReference>
<dbReference type="PROSITE" id="PS51712">
    <property type="entry name" value="G_ENGA"/>
    <property type="match status" value="2"/>
</dbReference>